<name>PETL_BARVE</name>
<gene>
    <name evidence="1" type="primary">petL</name>
</gene>
<keyword id="KW-0150">Chloroplast</keyword>
<keyword id="KW-0249">Electron transport</keyword>
<keyword id="KW-0472">Membrane</keyword>
<keyword id="KW-0602">Photosynthesis</keyword>
<keyword id="KW-0934">Plastid</keyword>
<keyword id="KW-0793">Thylakoid</keyword>
<keyword id="KW-0812">Transmembrane</keyword>
<keyword id="KW-1133">Transmembrane helix</keyword>
<keyword id="KW-0813">Transport</keyword>
<geneLocation type="chloroplast"/>
<protein>
    <recommendedName>
        <fullName evidence="1">Cytochrome b6-f complex subunit 6</fullName>
    </recommendedName>
    <alternativeName>
        <fullName evidence="1">Cytochrome b6-f complex subunit PetL</fullName>
    </alternativeName>
    <alternativeName>
        <fullName evidence="1">Cytochrome b6-f complex subunit VI</fullName>
    </alternativeName>
</protein>
<dbReference type="EMBL" id="AP009370">
    <property type="protein sequence ID" value="BAF50128.1"/>
    <property type="molecule type" value="Genomic_DNA"/>
</dbReference>
<dbReference type="RefSeq" id="YP_001123304.1">
    <property type="nucleotide sequence ID" value="NC_009269.1"/>
</dbReference>
<dbReference type="SMR" id="A4QKC3"/>
<dbReference type="GeneID" id="4961932"/>
<dbReference type="GO" id="GO:0009535">
    <property type="term" value="C:chloroplast thylakoid membrane"/>
    <property type="evidence" value="ECO:0007669"/>
    <property type="project" value="UniProtKB-SubCell"/>
</dbReference>
<dbReference type="GO" id="GO:0009512">
    <property type="term" value="C:cytochrome b6f complex"/>
    <property type="evidence" value="ECO:0007669"/>
    <property type="project" value="InterPro"/>
</dbReference>
<dbReference type="GO" id="GO:0045158">
    <property type="term" value="F:electron transporter, transferring electrons within cytochrome b6/f complex of photosystem II activity"/>
    <property type="evidence" value="ECO:0007669"/>
    <property type="project" value="UniProtKB-UniRule"/>
</dbReference>
<dbReference type="GO" id="GO:0015979">
    <property type="term" value="P:photosynthesis"/>
    <property type="evidence" value="ECO:0007669"/>
    <property type="project" value="UniProtKB-KW"/>
</dbReference>
<dbReference type="HAMAP" id="MF_00433">
    <property type="entry name" value="Cytb6_f_PetL"/>
    <property type="match status" value="1"/>
</dbReference>
<dbReference type="InterPro" id="IPR007802">
    <property type="entry name" value="Cyt_b6/f_cplx_su6"/>
</dbReference>
<dbReference type="PANTHER" id="PTHR37266">
    <property type="entry name" value="CYTOCHROME B6-F COMPLEX SUBUNIT 6"/>
    <property type="match status" value="1"/>
</dbReference>
<dbReference type="PANTHER" id="PTHR37266:SF1">
    <property type="entry name" value="CYTOCHROME B6-F COMPLEX SUBUNIT 6"/>
    <property type="match status" value="1"/>
</dbReference>
<dbReference type="Pfam" id="PF05115">
    <property type="entry name" value="PetL"/>
    <property type="match status" value="1"/>
</dbReference>
<accession>A4QKC3</accession>
<proteinExistence type="inferred from homology"/>
<comment type="function">
    <text evidence="1">Component of the cytochrome b6-f complex, which mediates electron transfer between photosystem II (PSII) and photosystem I (PSI), cyclic electron flow around PSI, and state transitions. PetL is important for photoautotrophic growth as well as for electron transfer efficiency and stability of the cytochrome b6-f complex.</text>
</comment>
<comment type="subunit">
    <text evidence="1">The 4 large subunits of the cytochrome b6-f complex are cytochrome b6, subunit IV (17 kDa polypeptide, PetD), cytochrome f and the Rieske protein, while the 4 small subunits are PetG, PetL, PetM and PetN. The complex functions as a dimer.</text>
</comment>
<comment type="subcellular location">
    <subcellularLocation>
        <location evidence="1">Plastid</location>
        <location evidence="1">Chloroplast thylakoid membrane</location>
        <topology evidence="1">Single-pass membrane protein</topology>
    </subcellularLocation>
</comment>
<comment type="similarity">
    <text evidence="1">Belongs to the PetL family.</text>
</comment>
<organism>
    <name type="scientific">Barbarea verna</name>
    <name type="common">Land cress</name>
    <name type="synonym">Erysimum vernum</name>
    <dbReference type="NCBI Taxonomy" id="50458"/>
    <lineage>
        <taxon>Eukaryota</taxon>
        <taxon>Viridiplantae</taxon>
        <taxon>Streptophyta</taxon>
        <taxon>Embryophyta</taxon>
        <taxon>Tracheophyta</taxon>
        <taxon>Spermatophyta</taxon>
        <taxon>Magnoliopsida</taxon>
        <taxon>eudicotyledons</taxon>
        <taxon>Gunneridae</taxon>
        <taxon>Pentapetalae</taxon>
        <taxon>rosids</taxon>
        <taxon>malvids</taxon>
        <taxon>Brassicales</taxon>
        <taxon>Brassicaceae</taxon>
        <taxon>Cardamineae</taxon>
        <taxon>Barbarea</taxon>
    </lineage>
</organism>
<feature type="chain" id="PRO_0000300135" description="Cytochrome b6-f complex subunit 6">
    <location>
        <begin position="1"/>
        <end position="31"/>
    </location>
</feature>
<feature type="transmembrane region" description="Helical" evidence="1">
    <location>
        <begin position="4"/>
        <end position="24"/>
    </location>
</feature>
<evidence type="ECO:0000255" key="1">
    <source>
        <dbReference type="HAMAP-Rule" id="MF_00433"/>
    </source>
</evidence>
<reference key="1">
    <citation type="submission" date="2007-03" db="EMBL/GenBank/DDBJ databases">
        <title>Sequencing analysis of Barbarea verna chloroplast DNA.</title>
        <authorList>
            <person name="Hosouchi T."/>
            <person name="Tsuruoka H."/>
            <person name="Kotani H."/>
        </authorList>
    </citation>
    <scope>NUCLEOTIDE SEQUENCE [LARGE SCALE GENOMIC DNA]</scope>
</reference>
<sequence length="31" mass="3401">MPTITSYFGFLLAALTITSVLFIGLSKIRLI</sequence>